<keyword id="KW-0227">DNA damage</keyword>
<keyword id="KW-0234">DNA repair</keyword>
<keyword id="KW-0235">DNA replication</keyword>
<keyword id="KW-0436">Ligase</keyword>
<keyword id="KW-0460">Magnesium</keyword>
<keyword id="KW-0464">Manganese</keyword>
<keyword id="KW-0479">Metal-binding</keyword>
<keyword id="KW-0520">NAD</keyword>
<keyword id="KW-0862">Zinc</keyword>
<sequence>MNDQGIKESIETLKEQIRKYDYHYYVLDEPLVPDAEYDRCFKALQQYEEQYPQFLSPDSPTQRVSGTPSDAFMPVAHKQPMLSLSNVFTIDELKAFIKRAIEKLDEPNQQLVFACEPKLDGLAVNMTYEGGILTHAATRGDGAVGENITANIKTIASVPLRLRVSNPPKLIEVRGEVYIPKADFEAYNARARELGEKTFANPRNAAAGSLRQLNPEISASRPLAIYCYSIGACEDYKLPNSHLEQLNLLKEFGFRVSPETRRAIGVEGCLDYYQYMLAKRNQLPFEIDGVVYKIDSISLQQQLGYVSRAPRFACAHKFPATEEMTRLIAVDFQVGRTGAVTPVARLEPVSVGGVTVSNATLHNFDEITRKDIRIGDTVIIRRAGDVIPEVVSVILEKRPINARKIELPKNCPVCGSEVVREADEAIARCIGGLYCKAQLKRMMWHFASRKAMYIEGLGSVLIDQLVDEGIVHHLADLYELDLQTLANLPRMGEKSAKNLLSALEKSKKTTFNRFLYALGIREIGEAGARVLAEHYCDVESLKSATIEELMTLNDIGPVAASHVVHFFAQAHNLEVIDRLLELGIHWPKPEKIQVNQQNPFFGKTVVLTGTLSAMGREEAKAKLLALGAKVSGSVSSKTDYVIAGSEAGSKLIKATELGVAIIEEDEFLKWVNS</sequence>
<evidence type="ECO:0000255" key="1">
    <source>
        <dbReference type="HAMAP-Rule" id="MF_01588"/>
    </source>
</evidence>
<name>DNLJ_LEGPA</name>
<reference key="1">
    <citation type="journal article" date="2004" name="Nat. Genet.">
        <title>Evidence in the Legionella pneumophila genome for exploitation of host cell functions and high genome plasticity.</title>
        <authorList>
            <person name="Cazalet C."/>
            <person name="Rusniok C."/>
            <person name="Brueggemann H."/>
            <person name="Zidane N."/>
            <person name="Magnier A."/>
            <person name="Ma L."/>
            <person name="Tichit M."/>
            <person name="Jarraud S."/>
            <person name="Bouchier C."/>
            <person name="Vandenesch F."/>
            <person name="Kunst F."/>
            <person name="Etienne J."/>
            <person name="Glaser P."/>
            <person name="Buchrieser C."/>
        </authorList>
    </citation>
    <scope>NUCLEOTIDE SEQUENCE [LARGE SCALE GENOMIC DNA]</scope>
    <source>
        <strain>Paris</strain>
    </source>
</reference>
<dbReference type="EC" id="6.5.1.2" evidence="1"/>
<dbReference type="EMBL" id="CR628336">
    <property type="protein sequence ID" value="CAH12171.1"/>
    <property type="molecule type" value="Genomic_DNA"/>
</dbReference>
<dbReference type="RefSeq" id="WP_011213382.1">
    <property type="nucleotide sequence ID" value="NC_006368.1"/>
</dbReference>
<dbReference type="SMR" id="Q5X6E6"/>
<dbReference type="KEGG" id="lpp:lpp1020"/>
<dbReference type="LegioList" id="lpp1020"/>
<dbReference type="HOGENOM" id="CLU_007764_2_1_6"/>
<dbReference type="GO" id="GO:0005829">
    <property type="term" value="C:cytosol"/>
    <property type="evidence" value="ECO:0007669"/>
    <property type="project" value="TreeGrafter"/>
</dbReference>
<dbReference type="GO" id="GO:0003677">
    <property type="term" value="F:DNA binding"/>
    <property type="evidence" value="ECO:0007669"/>
    <property type="project" value="InterPro"/>
</dbReference>
<dbReference type="GO" id="GO:0003911">
    <property type="term" value="F:DNA ligase (NAD+) activity"/>
    <property type="evidence" value="ECO:0007669"/>
    <property type="project" value="UniProtKB-UniRule"/>
</dbReference>
<dbReference type="GO" id="GO:0046872">
    <property type="term" value="F:metal ion binding"/>
    <property type="evidence" value="ECO:0007669"/>
    <property type="project" value="UniProtKB-KW"/>
</dbReference>
<dbReference type="GO" id="GO:0006281">
    <property type="term" value="P:DNA repair"/>
    <property type="evidence" value="ECO:0007669"/>
    <property type="project" value="UniProtKB-KW"/>
</dbReference>
<dbReference type="GO" id="GO:0006260">
    <property type="term" value="P:DNA replication"/>
    <property type="evidence" value="ECO:0007669"/>
    <property type="project" value="UniProtKB-KW"/>
</dbReference>
<dbReference type="CDD" id="cd17748">
    <property type="entry name" value="BRCT_DNA_ligase_like"/>
    <property type="match status" value="1"/>
</dbReference>
<dbReference type="CDD" id="cd00114">
    <property type="entry name" value="LIGANc"/>
    <property type="match status" value="1"/>
</dbReference>
<dbReference type="FunFam" id="1.10.150.20:FF:000006">
    <property type="entry name" value="DNA ligase"/>
    <property type="match status" value="1"/>
</dbReference>
<dbReference type="FunFam" id="1.10.150.20:FF:000007">
    <property type="entry name" value="DNA ligase"/>
    <property type="match status" value="1"/>
</dbReference>
<dbReference type="FunFam" id="2.40.50.140:FF:000012">
    <property type="entry name" value="DNA ligase"/>
    <property type="match status" value="1"/>
</dbReference>
<dbReference type="FunFam" id="3.30.470.30:FF:000001">
    <property type="entry name" value="DNA ligase"/>
    <property type="match status" value="1"/>
</dbReference>
<dbReference type="Gene3D" id="6.20.10.30">
    <property type="match status" value="1"/>
</dbReference>
<dbReference type="Gene3D" id="1.10.150.20">
    <property type="entry name" value="5' to 3' exonuclease, C-terminal subdomain"/>
    <property type="match status" value="2"/>
</dbReference>
<dbReference type="Gene3D" id="3.40.50.10190">
    <property type="entry name" value="BRCT domain"/>
    <property type="match status" value="1"/>
</dbReference>
<dbReference type="Gene3D" id="3.30.470.30">
    <property type="entry name" value="DNA ligase/mRNA capping enzyme"/>
    <property type="match status" value="1"/>
</dbReference>
<dbReference type="Gene3D" id="1.10.287.610">
    <property type="entry name" value="Helix hairpin bin"/>
    <property type="match status" value="1"/>
</dbReference>
<dbReference type="Gene3D" id="2.40.50.140">
    <property type="entry name" value="Nucleic acid-binding proteins"/>
    <property type="match status" value="1"/>
</dbReference>
<dbReference type="HAMAP" id="MF_01588">
    <property type="entry name" value="DNA_ligase_A"/>
    <property type="match status" value="1"/>
</dbReference>
<dbReference type="InterPro" id="IPR001357">
    <property type="entry name" value="BRCT_dom"/>
</dbReference>
<dbReference type="InterPro" id="IPR036420">
    <property type="entry name" value="BRCT_dom_sf"/>
</dbReference>
<dbReference type="InterPro" id="IPR041663">
    <property type="entry name" value="DisA/LigA_HHH"/>
</dbReference>
<dbReference type="InterPro" id="IPR001679">
    <property type="entry name" value="DNA_ligase"/>
</dbReference>
<dbReference type="InterPro" id="IPR018239">
    <property type="entry name" value="DNA_ligase_AS"/>
</dbReference>
<dbReference type="InterPro" id="IPR033136">
    <property type="entry name" value="DNA_ligase_CS"/>
</dbReference>
<dbReference type="InterPro" id="IPR013839">
    <property type="entry name" value="DNAligase_adenylation"/>
</dbReference>
<dbReference type="InterPro" id="IPR013840">
    <property type="entry name" value="DNAligase_N"/>
</dbReference>
<dbReference type="InterPro" id="IPR003583">
    <property type="entry name" value="Hlx-hairpin-Hlx_DNA-bd_motif"/>
</dbReference>
<dbReference type="InterPro" id="IPR012340">
    <property type="entry name" value="NA-bd_OB-fold"/>
</dbReference>
<dbReference type="InterPro" id="IPR004150">
    <property type="entry name" value="NAD_DNA_ligase_OB"/>
</dbReference>
<dbReference type="InterPro" id="IPR010994">
    <property type="entry name" value="RuvA_2-like"/>
</dbReference>
<dbReference type="InterPro" id="IPR004149">
    <property type="entry name" value="Znf_DNAligase_C4"/>
</dbReference>
<dbReference type="NCBIfam" id="TIGR00575">
    <property type="entry name" value="dnlj"/>
    <property type="match status" value="1"/>
</dbReference>
<dbReference type="NCBIfam" id="NF005932">
    <property type="entry name" value="PRK07956.1"/>
    <property type="match status" value="1"/>
</dbReference>
<dbReference type="PANTHER" id="PTHR23389">
    <property type="entry name" value="CHROMOSOME TRANSMISSION FIDELITY FACTOR 18"/>
    <property type="match status" value="1"/>
</dbReference>
<dbReference type="PANTHER" id="PTHR23389:SF9">
    <property type="entry name" value="DNA LIGASE"/>
    <property type="match status" value="1"/>
</dbReference>
<dbReference type="Pfam" id="PF00533">
    <property type="entry name" value="BRCT"/>
    <property type="match status" value="1"/>
</dbReference>
<dbReference type="Pfam" id="PF01653">
    <property type="entry name" value="DNA_ligase_aden"/>
    <property type="match status" value="1"/>
</dbReference>
<dbReference type="Pfam" id="PF03120">
    <property type="entry name" value="DNA_ligase_OB"/>
    <property type="match status" value="1"/>
</dbReference>
<dbReference type="Pfam" id="PF03119">
    <property type="entry name" value="DNA_ligase_ZBD"/>
    <property type="match status" value="1"/>
</dbReference>
<dbReference type="Pfam" id="PF12826">
    <property type="entry name" value="HHH_2"/>
    <property type="match status" value="1"/>
</dbReference>
<dbReference type="Pfam" id="PF14520">
    <property type="entry name" value="HHH_5"/>
    <property type="match status" value="1"/>
</dbReference>
<dbReference type="Pfam" id="PF22745">
    <property type="entry name" value="Nlig-Ia"/>
    <property type="match status" value="1"/>
</dbReference>
<dbReference type="PIRSF" id="PIRSF001604">
    <property type="entry name" value="LigA"/>
    <property type="match status" value="1"/>
</dbReference>
<dbReference type="SMART" id="SM00292">
    <property type="entry name" value="BRCT"/>
    <property type="match status" value="1"/>
</dbReference>
<dbReference type="SMART" id="SM00278">
    <property type="entry name" value="HhH1"/>
    <property type="match status" value="4"/>
</dbReference>
<dbReference type="SMART" id="SM00532">
    <property type="entry name" value="LIGANc"/>
    <property type="match status" value="1"/>
</dbReference>
<dbReference type="SUPFAM" id="SSF52113">
    <property type="entry name" value="BRCT domain"/>
    <property type="match status" value="1"/>
</dbReference>
<dbReference type="SUPFAM" id="SSF56091">
    <property type="entry name" value="DNA ligase/mRNA capping enzyme, catalytic domain"/>
    <property type="match status" value="1"/>
</dbReference>
<dbReference type="SUPFAM" id="SSF50249">
    <property type="entry name" value="Nucleic acid-binding proteins"/>
    <property type="match status" value="1"/>
</dbReference>
<dbReference type="SUPFAM" id="SSF47781">
    <property type="entry name" value="RuvA domain 2-like"/>
    <property type="match status" value="1"/>
</dbReference>
<dbReference type="PROSITE" id="PS50172">
    <property type="entry name" value="BRCT"/>
    <property type="match status" value="1"/>
</dbReference>
<dbReference type="PROSITE" id="PS01055">
    <property type="entry name" value="DNA_LIGASE_N1"/>
    <property type="match status" value="1"/>
</dbReference>
<dbReference type="PROSITE" id="PS01056">
    <property type="entry name" value="DNA_LIGASE_N2"/>
    <property type="match status" value="1"/>
</dbReference>
<gene>
    <name evidence="1" type="primary">ligA</name>
    <name type="ordered locus">lpp1020</name>
</gene>
<feature type="chain" id="PRO_0000313287" description="DNA ligase">
    <location>
        <begin position="1"/>
        <end position="673"/>
    </location>
</feature>
<feature type="domain" description="BRCT" evidence="1">
    <location>
        <begin position="595"/>
        <end position="673"/>
    </location>
</feature>
<feature type="active site" description="N6-AMP-lysine intermediate" evidence="1">
    <location>
        <position position="118"/>
    </location>
</feature>
<feature type="binding site" evidence="1">
    <location>
        <begin position="34"/>
        <end position="38"/>
    </location>
    <ligand>
        <name>NAD(+)</name>
        <dbReference type="ChEBI" id="CHEBI:57540"/>
    </ligand>
</feature>
<feature type="binding site" evidence="1">
    <location>
        <begin position="83"/>
        <end position="84"/>
    </location>
    <ligand>
        <name>NAD(+)</name>
        <dbReference type="ChEBI" id="CHEBI:57540"/>
    </ligand>
</feature>
<feature type="binding site" evidence="1">
    <location>
        <position position="116"/>
    </location>
    <ligand>
        <name>NAD(+)</name>
        <dbReference type="ChEBI" id="CHEBI:57540"/>
    </ligand>
</feature>
<feature type="binding site" evidence="1">
    <location>
        <position position="139"/>
    </location>
    <ligand>
        <name>NAD(+)</name>
        <dbReference type="ChEBI" id="CHEBI:57540"/>
    </ligand>
</feature>
<feature type="binding site" evidence="1">
    <location>
        <position position="176"/>
    </location>
    <ligand>
        <name>NAD(+)</name>
        <dbReference type="ChEBI" id="CHEBI:57540"/>
    </ligand>
</feature>
<feature type="binding site" evidence="1">
    <location>
        <position position="293"/>
    </location>
    <ligand>
        <name>NAD(+)</name>
        <dbReference type="ChEBI" id="CHEBI:57540"/>
    </ligand>
</feature>
<feature type="binding site" evidence="1">
    <location>
        <position position="317"/>
    </location>
    <ligand>
        <name>NAD(+)</name>
        <dbReference type="ChEBI" id="CHEBI:57540"/>
    </ligand>
</feature>
<feature type="binding site" evidence="1">
    <location>
        <position position="411"/>
    </location>
    <ligand>
        <name>Zn(2+)</name>
        <dbReference type="ChEBI" id="CHEBI:29105"/>
    </ligand>
</feature>
<feature type="binding site" evidence="1">
    <location>
        <position position="414"/>
    </location>
    <ligand>
        <name>Zn(2+)</name>
        <dbReference type="ChEBI" id="CHEBI:29105"/>
    </ligand>
</feature>
<feature type="binding site" evidence="1">
    <location>
        <position position="429"/>
    </location>
    <ligand>
        <name>Zn(2+)</name>
        <dbReference type="ChEBI" id="CHEBI:29105"/>
    </ligand>
</feature>
<feature type="binding site" evidence="1">
    <location>
        <position position="435"/>
    </location>
    <ligand>
        <name>Zn(2+)</name>
        <dbReference type="ChEBI" id="CHEBI:29105"/>
    </ligand>
</feature>
<proteinExistence type="inferred from homology"/>
<protein>
    <recommendedName>
        <fullName evidence="1">DNA ligase</fullName>
        <ecNumber evidence="1">6.5.1.2</ecNumber>
    </recommendedName>
    <alternativeName>
        <fullName evidence="1">Polydeoxyribonucleotide synthase [NAD(+)]</fullName>
    </alternativeName>
</protein>
<organism>
    <name type="scientific">Legionella pneumophila (strain Paris)</name>
    <dbReference type="NCBI Taxonomy" id="297246"/>
    <lineage>
        <taxon>Bacteria</taxon>
        <taxon>Pseudomonadati</taxon>
        <taxon>Pseudomonadota</taxon>
        <taxon>Gammaproteobacteria</taxon>
        <taxon>Legionellales</taxon>
        <taxon>Legionellaceae</taxon>
        <taxon>Legionella</taxon>
    </lineage>
</organism>
<comment type="function">
    <text evidence="1">DNA ligase that catalyzes the formation of phosphodiester linkages between 5'-phosphoryl and 3'-hydroxyl groups in double-stranded DNA using NAD as a coenzyme and as the energy source for the reaction. It is essential for DNA replication and repair of damaged DNA.</text>
</comment>
<comment type="catalytic activity">
    <reaction evidence="1">
        <text>NAD(+) + (deoxyribonucleotide)n-3'-hydroxyl + 5'-phospho-(deoxyribonucleotide)m = (deoxyribonucleotide)n+m + AMP + beta-nicotinamide D-nucleotide.</text>
        <dbReference type="EC" id="6.5.1.2"/>
    </reaction>
</comment>
<comment type="cofactor">
    <cofactor evidence="1">
        <name>Mg(2+)</name>
        <dbReference type="ChEBI" id="CHEBI:18420"/>
    </cofactor>
    <cofactor evidence="1">
        <name>Mn(2+)</name>
        <dbReference type="ChEBI" id="CHEBI:29035"/>
    </cofactor>
</comment>
<comment type="similarity">
    <text evidence="1">Belongs to the NAD-dependent DNA ligase family. LigA subfamily.</text>
</comment>
<accession>Q5X6E6</accession>